<sequence>MSDAKELKQVLTGPIVNNNPIALQVLGVCSALAVTSKLETALVMALALTAVTAFSNLFISMIRNHIPSSVRIIVQMTIIASLVIVVDQLLQAYAYQISKQLSVFVGLIITNCIVMGRAEAYAMKTPPMMSFMDGIGNGLGYGAILLAVGFVRELFGNGSLFGVEILHKISDGGWYQPNGLLLLPPSAFFLIGVLIWIIRTYKPEQVEAKG</sequence>
<accession>B8EC46</accession>
<comment type="function">
    <text evidence="1">NQR complex catalyzes the reduction of ubiquinone-1 to ubiquinol by two successive reactions, coupled with the transport of Na(+) ions from the cytoplasm to the periplasm. NqrA to NqrE are probably involved in the second step, the conversion of ubisemiquinone to ubiquinol.</text>
</comment>
<comment type="catalytic activity">
    <reaction evidence="1">
        <text>a ubiquinone + n Na(+)(in) + NADH + H(+) = a ubiquinol + n Na(+)(out) + NAD(+)</text>
        <dbReference type="Rhea" id="RHEA:47748"/>
        <dbReference type="Rhea" id="RHEA-COMP:9565"/>
        <dbReference type="Rhea" id="RHEA-COMP:9566"/>
        <dbReference type="ChEBI" id="CHEBI:15378"/>
        <dbReference type="ChEBI" id="CHEBI:16389"/>
        <dbReference type="ChEBI" id="CHEBI:17976"/>
        <dbReference type="ChEBI" id="CHEBI:29101"/>
        <dbReference type="ChEBI" id="CHEBI:57540"/>
        <dbReference type="ChEBI" id="CHEBI:57945"/>
        <dbReference type="EC" id="7.2.1.1"/>
    </reaction>
</comment>
<comment type="subunit">
    <text evidence="1">Composed of six subunits; NqrA, NqrB, NqrC, NqrD, NqrE and NqrF.</text>
</comment>
<comment type="subcellular location">
    <subcellularLocation>
        <location evidence="1">Cell inner membrane</location>
        <topology evidence="1">Multi-pass membrane protein</topology>
    </subcellularLocation>
</comment>
<comment type="similarity">
    <text evidence="1">Belongs to the NqrDE/RnfAE family.</text>
</comment>
<organism>
    <name type="scientific">Shewanella baltica (strain OS223)</name>
    <dbReference type="NCBI Taxonomy" id="407976"/>
    <lineage>
        <taxon>Bacteria</taxon>
        <taxon>Pseudomonadati</taxon>
        <taxon>Pseudomonadota</taxon>
        <taxon>Gammaproteobacteria</taxon>
        <taxon>Alteromonadales</taxon>
        <taxon>Shewanellaceae</taxon>
        <taxon>Shewanella</taxon>
    </lineage>
</organism>
<feature type="chain" id="PRO_1000134932" description="Na(+)-translocating NADH-quinone reductase subunit D">
    <location>
        <begin position="1"/>
        <end position="210"/>
    </location>
</feature>
<feature type="transmembrane region" description="Helical" evidence="1">
    <location>
        <begin position="14"/>
        <end position="34"/>
    </location>
</feature>
<feature type="transmembrane region" description="Helical" evidence="1">
    <location>
        <begin position="42"/>
        <end position="62"/>
    </location>
</feature>
<feature type="transmembrane region" description="Helical" evidence="1">
    <location>
        <begin position="72"/>
        <end position="92"/>
    </location>
</feature>
<feature type="transmembrane region" description="Helical" evidence="1">
    <location>
        <begin position="103"/>
        <end position="123"/>
    </location>
</feature>
<feature type="transmembrane region" description="Helical" evidence="1">
    <location>
        <begin position="131"/>
        <end position="151"/>
    </location>
</feature>
<feature type="transmembrane region" description="Helical" evidence="1">
    <location>
        <begin position="178"/>
        <end position="198"/>
    </location>
</feature>
<reference key="1">
    <citation type="submission" date="2008-12" db="EMBL/GenBank/DDBJ databases">
        <title>Complete sequence of chromosome of Shewanella baltica OS223.</title>
        <authorList>
            <consortium name="US DOE Joint Genome Institute"/>
            <person name="Lucas S."/>
            <person name="Copeland A."/>
            <person name="Lapidus A."/>
            <person name="Glavina del Rio T."/>
            <person name="Dalin E."/>
            <person name="Tice H."/>
            <person name="Bruce D."/>
            <person name="Goodwin L."/>
            <person name="Pitluck S."/>
            <person name="Chertkov O."/>
            <person name="Meincke L."/>
            <person name="Brettin T."/>
            <person name="Detter J.C."/>
            <person name="Han C."/>
            <person name="Kuske C.R."/>
            <person name="Larimer F."/>
            <person name="Land M."/>
            <person name="Hauser L."/>
            <person name="Kyrpides N."/>
            <person name="Ovchinnikova G."/>
            <person name="Brettar I."/>
            <person name="Rodrigues J."/>
            <person name="Konstantinidis K."/>
            <person name="Tiedje J."/>
        </authorList>
    </citation>
    <scope>NUCLEOTIDE SEQUENCE [LARGE SCALE GENOMIC DNA]</scope>
    <source>
        <strain>OS223</strain>
    </source>
</reference>
<dbReference type="EC" id="7.2.1.1" evidence="1"/>
<dbReference type="EMBL" id="CP001252">
    <property type="protein sequence ID" value="ACK47847.1"/>
    <property type="molecule type" value="Genomic_DNA"/>
</dbReference>
<dbReference type="RefSeq" id="WP_006080467.1">
    <property type="nucleotide sequence ID" value="NC_011663.1"/>
</dbReference>
<dbReference type="SMR" id="B8EC46"/>
<dbReference type="KEGG" id="sbp:Sbal223_3363"/>
<dbReference type="HOGENOM" id="CLU_046659_1_1_6"/>
<dbReference type="Proteomes" id="UP000002507">
    <property type="component" value="Chromosome"/>
</dbReference>
<dbReference type="GO" id="GO:0005886">
    <property type="term" value="C:plasma membrane"/>
    <property type="evidence" value="ECO:0007669"/>
    <property type="project" value="UniProtKB-SubCell"/>
</dbReference>
<dbReference type="GO" id="GO:0016655">
    <property type="term" value="F:oxidoreductase activity, acting on NAD(P)H, quinone or similar compound as acceptor"/>
    <property type="evidence" value="ECO:0007669"/>
    <property type="project" value="UniProtKB-UniRule"/>
</dbReference>
<dbReference type="GO" id="GO:0006814">
    <property type="term" value="P:sodium ion transport"/>
    <property type="evidence" value="ECO:0007669"/>
    <property type="project" value="UniProtKB-UniRule"/>
</dbReference>
<dbReference type="HAMAP" id="MF_00428">
    <property type="entry name" value="NqrD"/>
    <property type="match status" value="1"/>
</dbReference>
<dbReference type="InterPro" id="IPR011292">
    <property type="entry name" value="NqrD"/>
</dbReference>
<dbReference type="InterPro" id="IPR003667">
    <property type="entry name" value="NqrDE/RnfAE"/>
</dbReference>
<dbReference type="NCBIfam" id="TIGR01939">
    <property type="entry name" value="nqrD"/>
    <property type="match status" value="1"/>
</dbReference>
<dbReference type="NCBIfam" id="NF006777">
    <property type="entry name" value="PRK09292.1"/>
    <property type="match status" value="1"/>
</dbReference>
<dbReference type="NCBIfam" id="NF009070">
    <property type="entry name" value="PRK12405.1"/>
    <property type="match status" value="1"/>
</dbReference>
<dbReference type="PANTHER" id="PTHR30586">
    <property type="entry name" value="ELECTRON TRANSPORT COMPLEX PROTEIN RNFE"/>
    <property type="match status" value="1"/>
</dbReference>
<dbReference type="PANTHER" id="PTHR30586:SF1">
    <property type="entry name" value="NA(+)-TRANSLOCATING NADH-QUINONE REDUCTASE SUBUNIT D"/>
    <property type="match status" value="1"/>
</dbReference>
<dbReference type="Pfam" id="PF02508">
    <property type="entry name" value="Rnf-Nqr"/>
    <property type="match status" value="1"/>
</dbReference>
<dbReference type="PIRSF" id="PIRSF006102">
    <property type="entry name" value="NQR_DE"/>
    <property type="match status" value="1"/>
</dbReference>
<protein>
    <recommendedName>
        <fullName evidence="1">Na(+)-translocating NADH-quinone reductase subunit D</fullName>
        <shortName evidence="1">Na(+)-NQR subunit D</shortName>
        <shortName evidence="1">Na(+)-translocating NQR subunit D</shortName>
        <ecNumber evidence="1">7.2.1.1</ecNumber>
    </recommendedName>
    <alternativeName>
        <fullName evidence="1">NQR complex subunit D</fullName>
    </alternativeName>
    <alternativeName>
        <fullName evidence="1">NQR-1 subunit D</fullName>
    </alternativeName>
</protein>
<proteinExistence type="inferred from homology"/>
<gene>
    <name evidence="1" type="primary">nqrD</name>
    <name type="ordered locus">Sbal223_3363</name>
</gene>
<name>NQRD_SHEB2</name>
<evidence type="ECO:0000255" key="1">
    <source>
        <dbReference type="HAMAP-Rule" id="MF_00428"/>
    </source>
</evidence>
<keyword id="KW-0997">Cell inner membrane</keyword>
<keyword id="KW-1003">Cell membrane</keyword>
<keyword id="KW-0406">Ion transport</keyword>
<keyword id="KW-0472">Membrane</keyword>
<keyword id="KW-0520">NAD</keyword>
<keyword id="KW-0915">Sodium</keyword>
<keyword id="KW-0739">Sodium transport</keyword>
<keyword id="KW-1278">Translocase</keyword>
<keyword id="KW-0812">Transmembrane</keyword>
<keyword id="KW-1133">Transmembrane helix</keyword>
<keyword id="KW-0813">Transport</keyword>
<keyword id="KW-0830">Ubiquinone</keyword>